<accession>Q10ZG8</accession>
<protein>
    <recommendedName>
        <fullName evidence="1">NAD(P)H-quinone oxidoreductase chain 4 2</fullName>
        <ecNumber evidence="1">7.1.1.-</ecNumber>
    </recommendedName>
    <alternativeName>
        <fullName evidence="1">NAD(P)H dehydrogenase I, chain 4 2</fullName>
    </alternativeName>
    <alternativeName>
        <fullName evidence="1">NDH-1, chain 4 2</fullName>
    </alternativeName>
</protein>
<name>NU4C2_TRIEI</name>
<reference key="1">
    <citation type="journal article" date="2015" name="Proc. Natl. Acad. Sci. U.S.A.">
        <title>Trichodesmium genome maintains abundant, widespread noncoding DNA in situ, despite oligotrophic lifestyle.</title>
        <authorList>
            <person name="Walworth N."/>
            <person name="Pfreundt U."/>
            <person name="Nelson W.C."/>
            <person name="Mincer T."/>
            <person name="Heidelberg J.F."/>
            <person name="Fu F."/>
            <person name="Waterbury J.B."/>
            <person name="Glavina del Rio T."/>
            <person name="Goodwin L."/>
            <person name="Kyrpides N.C."/>
            <person name="Land M.L."/>
            <person name="Woyke T."/>
            <person name="Hutchins D.A."/>
            <person name="Hess W.R."/>
            <person name="Webb E.A."/>
        </authorList>
    </citation>
    <scope>NUCLEOTIDE SEQUENCE [LARGE SCALE GENOMIC DNA]</scope>
    <source>
        <strain>IMS101</strain>
    </source>
</reference>
<keyword id="KW-0472">Membrane</keyword>
<keyword id="KW-0520">NAD</keyword>
<keyword id="KW-0521">NADP</keyword>
<keyword id="KW-0618">Plastoquinone</keyword>
<keyword id="KW-0874">Quinone</keyword>
<keyword id="KW-0793">Thylakoid</keyword>
<keyword id="KW-1278">Translocase</keyword>
<keyword id="KW-0812">Transmembrane</keyword>
<keyword id="KW-1133">Transmembrane helix</keyword>
<comment type="function">
    <text evidence="1">NDH-1 shuttles electrons from NAD(P)H, via FMN and iron-sulfur (Fe-S) centers, to quinones in the respiratory chain. The immediate electron acceptor for the enzyme in this species is believed to be plastoquinone. Couples the redox reaction to proton translocation (for every two electrons transferred, four hydrogen ions are translocated across the cytoplasmic membrane), and thus conserves the redox energy in a proton gradient.</text>
</comment>
<comment type="catalytic activity">
    <reaction evidence="1">
        <text>a plastoquinone + NADH + (n+1) H(+)(in) = a plastoquinol + NAD(+) + n H(+)(out)</text>
        <dbReference type="Rhea" id="RHEA:42608"/>
        <dbReference type="Rhea" id="RHEA-COMP:9561"/>
        <dbReference type="Rhea" id="RHEA-COMP:9562"/>
        <dbReference type="ChEBI" id="CHEBI:15378"/>
        <dbReference type="ChEBI" id="CHEBI:17757"/>
        <dbReference type="ChEBI" id="CHEBI:57540"/>
        <dbReference type="ChEBI" id="CHEBI:57945"/>
        <dbReference type="ChEBI" id="CHEBI:62192"/>
    </reaction>
</comment>
<comment type="catalytic activity">
    <reaction evidence="1">
        <text>a plastoquinone + NADPH + (n+1) H(+)(in) = a plastoquinol + NADP(+) + n H(+)(out)</text>
        <dbReference type="Rhea" id="RHEA:42612"/>
        <dbReference type="Rhea" id="RHEA-COMP:9561"/>
        <dbReference type="Rhea" id="RHEA-COMP:9562"/>
        <dbReference type="ChEBI" id="CHEBI:15378"/>
        <dbReference type="ChEBI" id="CHEBI:17757"/>
        <dbReference type="ChEBI" id="CHEBI:57783"/>
        <dbReference type="ChEBI" id="CHEBI:58349"/>
        <dbReference type="ChEBI" id="CHEBI:62192"/>
    </reaction>
</comment>
<comment type="subcellular location">
    <subcellularLocation>
        <location evidence="1">Cellular thylakoid membrane</location>
        <topology evidence="1">Multi-pass membrane protein</topology>
    </subcellularLocation>
</comment>
<comment type="similarity">
    <text evidence="1">Belongs to the complex I subunit 4 family.</text>
</comment>
<evidence type="ECO:0000255" key="1">
    <source>
        <dbReference type="HAMAP-Rule" id="MF_00491"/>
    </source>
</evidence>
<proteinExistence type="inferred from homology"/>
<feature type="chain" id="PRO_0000343265" description="NAD(P)H-quinone oxidoreductase chain 4 2">
    <location>
        <begin position="1"/>
        <end position="561"/>
    </location>
</feature>
<feature type="transmembrane region" description="Helical" evidence="1">
    <location>
        <begin position="6"/>
        <end position="26"/>
    </location>
</feature>
<feature type="transmembrane region" description="Helical" evidence="1">
    <location>
        <begin position="36"/>
        <end position="56"/>
    </location>
</feature>
<feature type="transmembrane region" description="Helical" evidence="1">
    <location>
        <begin position="87"/>
        <end position="107"/>
    </location>
</feature>
<feature type="transmembrane region" description="Helical" evidence="1">
    <location>
        <begin position="115"/>
        <end position="135"/>
    </location>
</feature>
<feature type="transmembrane region" description="Helical" evidence="1">
    <location>
        <begin position="136"/>
        <end position="156"/>
    </location>
</feature>
<feature type="transmembrane region" description="Helical" evidence="1">
    <location>
        <begin position="169"/>
        <end position="189"/>
    </location>
</feature>
<feature type="transmembrane region" description="Helical" evidence="1">
    <location>
        <begin position="210"/>
        <end position="230"/>
    </location>
</feature>
<feature type="transmembrane region" description="Helical" evidence="1">
    <location>
        <begin position="244"/>
        <end position="264"/>
    </location>
</feature>
<feature type="transmembrane region" description="Helical" evidence="1">
    <location>
        <begin position="275"/>
        <end position="295"/>
    </location>
</feature>
<feature type="transmembrane region" description="Helical" evidence="1">
    <location>
        <begin position="312"/>
        <end position="332"/>
    </location>
</feature>
<feature type="transmembrane region" description="Helical" evidence="1">
    <location>
        <begin position="333"/>
        <end position="353"/>
    </location>
</feature>
<feature type="transmembrane region" description="Helical" evidence="1">
    <location>
        <begin position="376"/>
        <end position="396"/>
    </location>
</feature>
<feature type="transmembrane region" description="Helical" evidence="1">
    <location>
        <begin position="419"/>
        <end position="439"/>
    </location>
</feature>
<feature type="transmembrane region" description="Helical" evidence="1">
    <location>
        <begin position="490"/>
        <end position="510"/>
    </location>
</feature>
<sequence>MMETQFPWLTTIVLLPLLAALLIPFIPDQNGKTMRWYGLGVGAIDFALMCYVFWKYYNASDSGFQLVEKYLWLPQIGLSWAVSVDGLSMPLVLLAGLVTTLSIFAAWQVDYKPRLFYFLMLVLYSAQIGVFVAQDLMLLFIMWELELVPVYLLISIWGGKKRRYAATKFLLYTAAASIFILVAALGMALYGEGNTTFDMVELGLKDYPLAFELLLYLGLLITFGVKLAVFPLHTWLPDAHGEASAPVSMILAGVLLKMGGYGLIRLNLEMLSDAHVYFAPVLAILGVVNIVYGGLNSFGQSNMKRRLAYSSVAHMGFVLLGIASFTDLGISGALLQMISHGLIAAVLFFLAGVTYDRLHTLALDEMGGLGQVMPKIFALFTISAMASLALPGMSGFASELMVFVGVTSSDIYSSTFCTVTVFLAAVGLILTPIYLLSMLRQMFYSTGKAPVCLLKNTPYENEVLDEAICFGTNCVLPAKAVYTDAKPREVAIAACFLVLIIGIGLYPKIATRMYDAKIVAVNTQVRQSYTFAKADPQLFAKGFLFPRIPESEVLSVSGLLR</sequence>
<dbReference type="EC" id="7.1.1.-" evidence="1"/>
<dbReference type="EMBL" id="CP000393">
    <property type="protein sequence ID" value="ABG52356.1"/>
    <property type="molecule type" value="Genomic_DNA"/>
</dbReference>
<dbReference type="RefSeq" id="WP_011612701.1">
    <property type="nucleotide sequence ID" value="NC_008312.1"/>
</dbReference>
<dbReference type="SMR" id="Q10ZG8"/>
<dbReference type="STRING" id="203124.Tery_3241"/>
<dbReference type="KEGG" id="ter:Tery_3241"/>
<dbReference type="eggNOG" id="COG1008">
    <property type="taxonomic scope" value="Bacteria"/>
</dbReference>
<dbReference type="HOGENOM" id="CLU_007100_4_0_3"/>
<dbReference type="OrthoDB" id="9811718at2"/>
<dbReference type="GO" id="GO:0031676">
    <property type="term" value="C:plasma membrane-derived thylakoid membrane"/>
    <property type="evidence" value="ECO:0007669"/>
    <property type="project" value="UniProtKB-SubCell"/>
</dbReference>
<dbReference type="GO" id="GO:0008137">
    <property type="term" value="F:NADH dehydrogenase (ubiquinone) activity"/>
    <property type="evidence" value="ECO:0007669"/>
    <property type="project" value="InterPro"/>
</dbReference>
<dbReference type="GO" id="GO:0048039">
    <property type="term" value="F:ubiquinone binding"/>
    <property type="evidence" value="ECO:0007669"/>
    <property type="project" value="TreeGrafter"/>
</dbReference>
<dbReference type="GO" id="GO:0042773">
    <property type="term" value="P:ATP synthesis coupled electron transport"/>
    <property type="evidence" value="ECO:0007669"/>
    <property type="project" value="InterPro"/>
</dbReference>
<dbReference type="GO" id="GO:0015990">
    <property type="term" value="P:electron transport coupled proton transport"/>
    <property type="evidence" value="ECO:0007669"/>
    <property type="project" value="TreeGrafter"/>
</dbReference>
<dbReference type="HAMAP" id="MF_00491">
    <property type="entry name" value="NDH1_NuoM"/>
    <property type="match status" value="1"/>
</dbReference>
<dbReference type="InterPro" id="IPR022997">
    <property type="entry name" value="NADH_Q_OxRdtase_chain4"/>
</dbReference>
<dbReference type="InterPro" id="IPR010227">
    <property type="entry name" value="NADH_Q_OxRdtase_chainM/4"/>
</dbReference>
<dbReference type="InterPro" id="IPR003918">
    <property type="entry name" value="NADH_UbQ_OxRdtase"/>
</dbReference>
<dbReference type="InterPro" id="IPR001750">
    <property type="entry name" value="ND/Mrp_TM"/>
</dbReference>
<dbReference type="NCBIfam" id="TIGR01972">
    <property type="entry name" value="NDH_I_M"/>
    <property type="match status" value="1"/>
</dbReference>
<dbReference type="NCBIfam" id="NF009212">
    <property type="entry name" value="PRK12561.1"/>
    <property type="match status" value="1"/>
</dbReference>
<dbReference type="PANTHER" id="PTHR43507:SF21">
    <property type="entry name" value="NAD(P)H-QUINONE OXIDOREDUCTASE CHAIN 4, CHLOROPLASTIC"/>
    <property type="match status" value="1"/>
</dbReference>
<dbReference type="PANTHER" id="PTHR43507">
    <property type="entry name" value="NADH-UBIQUINONE OXIDOREDUCTASE CHAIN 4"/>
    <property type="match status" value="1"/>
</dbReference>
<dbReference type="Pfam" id="PF00361">
    <property type="entry name" value="Proton_antipo_M"/>
    <property type="match status" value="1"/>
</dbReference>
<dbReference type="PRINTS" id="PR01437">
    <property type="entry name" value="NUOXDRDTASE4"/>
</dbReference>
<gene>
    <name evidence="1" type="primary">ndhD2</name>
    <name type="ordered locus">Tery_3241</name>
</gene>
<organism>
    <name type="scientific">Trichodesmium erythraeum (strain IMS101)</name>
    <dbReference type="NCBI Taxonomy" id="203124"/>
    <lineage>
        <taxon>Bacteria</taxon>
        <taxon>Bacillati</taxon>
        <taxon>Cyanobacteriota</taxon>
        <taxon>Cyanophyceae</taxon>
        <taxon>Oscillatoriophycideae</taxon>
        <taxon>Oscillatoriales</taxon>
        <taxon>Microcoleaceae</taxon>
        <taxon>Trichodesmium</taxon>
    </lineage>
</organism>